<accession>A8FSY8</accession>
<keyword id="KW-1185">Reference proteome</keyword>
<comment type="similarity">
    <text evidence="1">Belongs to the UPF0178 family.</text>
</comment>
<protein>
    <recommendedName>
        <fullName evidence="1">UPF0178 protein Ssed_1350</fullName>
    </recommendedName>
</protein>
<gene>
    <name type="ordered locus">Ssed_1350</name>
</gene>
<reference key="1">
    <citation type="submission" date="2007-08" db="EMBL/GenBank/DDBJ databases">
        <title>Complete sequence of Shewanella sediminis HAW-EB3.</title>
        <authorList>
            <consortium name="US DOE Joint Genome Institute"/>
            <person name="Copeland A."/>
            <person name="Lucas S."/>
            <person name="Lapidus A."/>
            <person name="Barry K."/>
            <person name="Glavina del Rio T."/>
            <person name="Dalin E."/>
            <person name="Tice H."/>
            <person name="Pitluck S."/>
            <person name="Chertkov O."/>
            <person name="Brettin T."/>
            <person name="Bruce D."/>
            <person name="Detter J.C."/>
            <person name="Han C."/>
            <person name="Schmutz J."/>
            <person name="Larimer F."/>
            <person name="Land M."/>
            <person name="Hauser L."/>
            <person name="Kyrpides N."/>
            <person name="Kim E."/>
            <person name="Zhao J.-S."/>
            <person name="Richardson P."/>
        </authorList>
    </citation>
    <scope>NUCLEOTIDE SEQUENCE [LARGE SCALE GENOMIC DNA]</scope>
    <source>
        <strain>HAW-EB3</strain>
    </source>
</reference>
<name>Y1350_SHESH</name>
<sequence>MKIWVDADACPGVIKEILFRVADRAKVEVTLVANHSMRIPPSRFIKMVTVPSGFDVADDEIVKRLDAGDLVITADIPLASEVIDKGGIALNPRGELYTVQNIKSILNMRDFMDTMRASGVQTGGPAAIGASEKQAFGNQLDRFVTKYHKL</sequence>
<proteinExistence type="inferred from homology"/>
<organism>
    <name type="scientific">Shewanella sediminis (strain HAW-EB3)</name>
    <dbReference type="NCBI Taxonomy" id="425104"/>
    <lineage>
        <taxon>Bacteria</taxon>
        <taxon>Pseudomonadati</taxon>
        <taxon>Pseudomonadota</taxon>
        <taxon>Gammaproteobacteria</taxon>
        <taxon>Alteromonadales</taxon>
        <taxon>Shewanellaceae</taxon>
        <taxon>Shewanella</taxon>
    </lineage>
</organism>
<dbReference type="EMBL" id="CP000821">
    <property type="protein sequence ID" value="ABV35961.1"/>
    <property type="molecule type" value="Genomic_DNA"/>
</dbReference>
<dbReference type="RefSeq" id="WP_012141697.1">
    <property type="nucleotide sequence ID" value="NC_009831.1"/>
</dbReference>
<dbReference type="KEGG" id="sse:Ssed_1350"/>
<dbReference type="eggNOG" id="COG1671">
    <property type="taxonomic scope" value="Bacteria"/>
</dbReference>
<dbReference type="HOGENOM" id="CLU_106619_2_1_6"/>
<dbReference type="OrthoDB" id="9798918at2"/>
<dbReference type="Proteomes" id="UP000002015">
    <property type="component" value="Chromosome"/>
</dbReference>
<dbReference type="CDD" id="cd18720">
    <property type="entry name" value="PIN_YqxD-like"/>
    <property type="match status" value="1"/>
</dbReference>
<dbReference type="HAMAP" id="MF_00489">
    <property type="entry name" value="UPF0178"/>
    <property type="match status" value="1"/>
</dbReference>
<dbReference type="InterPro" id="IPR003791">
    <property type="entry name" value="UPF0178"/>
</dbReference>
<dbReference type="NCBIfam" id="NF001095">
    <property type="entry name" value="PRK00124.1"/>
    <property type="match status" value="1"/>
</dbReference>
<dbReference type="PANTHER" id="PTHR35146">
    <property type="entry name" value="UPF0178 PROTEIN YAII"/>
    <property type="match status" value="1"/>
</dbReference>
<dbReference type="PANTHER" id="PTHR35146:SF1">
    <property type="entry name" value="UPF0178 PROTEIN YAII"/>
    <property type="match status" value="1"/>
</dbReference>
<dbReference type="Pfam" id="PF02639">
    <property type="entry name" value="DUF188"/>
    <property type="match status" value="1"/>
</dbReference>
<evidence type="ECO:0000255" key="1">
    <source>
        <dbReference type="HAMAP-Rule" id="MF_00489"/>
    </source>
</evidence>
<feature type="chain" id="PRO_1000081387" description="UPF0178 protein Ssed_1350">
    <location>
        <begin position="1"/>
        <end position="150"/>
    </location>
</feature>